<keyword id="KW-0002">3D-structure</keyword>
<keyword id="KW-0119">Carbohydrate metabolism</keyword>
<keyword id="KW-0326">Glycosidase</keyword>
<keyword id="KW-0378">Hydrolase</keyword>
<keyword id="KW-0574">Periplasm</keyword>
<keyword id="KW-0732">Signal</keyword>
<accession>A5FBJ5</accession>
<reference key="1">
    <citation type="journal article" date="2009" name="Appl. Environ. Microbiol.">
        <title>Novel features of the polysaccharide-digesting gliding bacterium Flavobacterium johnsoniae as revealed by genome sequence analysis.</title>
        <authorList>
            <person name="McBride M.J."/>
            <person name="Xie G."/>
            <person name="Martens E.C."/>
            <person name="Lapidus A."/>
            <person name="Henrissat B."/>
            <person name="Rhodes R.G."/>
            <person name="Goltsman E."/>
            <person name="Wang W."/>
            <person name="Xu J."/>
            <person name="Hunnicutt D.W."/>
            <person name="Staroscik A.M."/>
            <person name="Hoover T.R."/>
            <person name="Cheng Y.Q."/>
            <person name="Stein J.L."/>
        </authorList>
    </citation>
    <scope>NUCLEOTIDE SEQUENCE [LARGE SCALE GENOMIC DNA]</scope>
    <source>
        <strain>ATCC 17061 / DSM 2064 / JCM 8514 / BCRC 14874 / CCUG 350202 / NBRC 14942 / NCIMB 11054 / UW101</strain>
    </source>
</reference>
<reference evidence="10 11" key="2">
    <citation type="journal article" date="2021" name="J. Biol. Chem.">
        <title>Structure of a bacterial alpha-1,2-glucosidase defines mechanisms of hydrolysis and substrate specificity in GH65 family hydrolases.</title>
        <authorList>
            <person name="Nakamura S."/>
            <person name="Nihira T."/>
            <person name="Kurata R."/>
            <person name="Nakai H."/>
            <person name="Funane K."/>
            <person name="Park E.Y."/>
            <person name="Miyazaki T."/>
        </authorList>
    </citation>
    <scope>X-RAY CRYSTALLOGRAPHY (1.40 ANGSTROMS) OF 24-681 OF APOENZYME AND IN COMPLEX WITH BETA-D-GLUCOSE</scope>
    <scope>IDENTIFICATION OF START SITE</scope>
    <scope>FUNCTION</scope>
    <scope>CATALYTIC ACTIVITY</scope>
    <scope>REACTION MECHANISM</scope>
    <scope>BIOPHYSICOCHEMICAL PROPERTIES</scope>
    <scope>SUBUNIT</scope>
    <scope>ACTIVE SITE</scope>
    <scope>MUTAGENESIS OF GLU-472 AND GLU-616</scope>
    <source>
        <strain>ATCC 17061 / DSM 2064 / JCM 8514 / BCRC 14874 / CCUG 350202 / NBRC 14942 / NCIMB 11054 / UW101</strain>
    </source>
</reference>
<reference evidence="12" key="3">
    <citation type="journal article" date="2023" name="J. Biol. Chem.">
        <title>Bacteroidota polysaccharide utilization system for branched dextran exopolysaccharides from lactic acid bacteria.</title>
        <authorList>
            <person name="Nakamura S."/>
            <person name="Kurata R."/>
            <person name="Tonozuka T."/>
            <person name="Funane K."/>
            <person name="Park E.Y."/>
            <person name="Miyazaki T."/>
        </authorList>
    </citation>
    <scope>X-RAY CRYSTALLOGRAPHY (1.56 ANGSTROMS) OF 24-681 IN COMPLEX WITH ISOMALTOSE</scope>
    <scope>FUNCTION</scope>
    <scope>ACTIVE SITE</scope>
</reference>
<dbReference type="EC" id="3.2.1.216" evidence="2"/>
<dbReference type="EMBL" id="CP000685">
    <property type="protein sequence ID" value="ABQ07432.1"/>
    <property type="status" value="ALT_INIT"/>
    <property type="molecule type" value="Genomic_DNA"/>
</dbReference>
<dbReference type="PDB" id="7FE3">
    <property type="method" value="X-ray"/>
    <property type="resolution" value="1.54 A"/>
    <property type="chains" value="A/B/C=24-681"/>
</dbReference>
<dbReference type="PDB" id="7FE4">
    <property type="method" value="X-ray"/>
    <property type="resolution" value="1.40 A"/>
    <property type="chains" value="A/B/C=24-681"/>
</dbReference>
<dbReference type="PDB" id="8IUC">
    <property type="method" value="X-ray"/>
    <property type="resolution" value="1.56 A"/>
    <property type="chains" value="A/B/C=24-681"/>
</dbReference>
<dbReference type="PDBsum" id="7FE3"/>
<dbReference type="PDBsum" id="7FE4"/>
<dbReference type="PDBsum" id="8IUC"/>
<dbReference type="SMR" id="A5FBJ5"/>
<dbReference type="STRING" id="376686.Fjoh_4428"/>
<dbReference type="CAZy" id="GH65">
    <property type="family name" value="Glycoside Hydrolase Family 65"/>
</dbReference>
<dbReference type="KEGG" id="fjo:Fjoh_4428"/>
<dbReference type="eggNOG" id="COG1554">
    <property type="taxonomic scope" value="Bacteria"/>
</dbReference>
<dbReference type="HOGENOM" id="CLU_006285_4_2_10"/>
<dbReference type="Proteomes" id="UP000006694">
    <property type="component" value="Chromosome"/>
</dbReference>
<dbReference type="GO" id="GO:0042597">
    <property type="term" value="C:periplasmic space"/>
    <property type="evidence" value="ECO:0007669"/>
    <property type="project" value="UniProtKB-SubCell"/>
</dbReference>
<dbReference type="GO" id="GO:0030246">
    <property type="term" value="F:carbohydrate binding"/>
    <property type="evidence" value="ECO:0007669"/>
    <property type="project" value="InterPro"/>
</dbReference>
<dbReference type="GO" id="GO:0016757">
    <property type="term" value="F:glycosyltransferase activity"/>
    <property type="evidence" value="ECO:0007669"/>
    <property type="project" value="UniProtKB-ARBA"/>
</dbReference>
<dbReference type="GO" id="GO:0004553">
    <property type="term" value="F:hydrolase activity, hydrolyzing O-glycosyl compounds"/>
    <property type="evidence" value="ECO:0007669"/>
    <property type="project" value="TreeGrafter"/>
</dbReference>
<dbReference type="GO" id="GO:0005975">
    <property type="term" value="P:carbohydrate metabolic process"/>
    <property type="evidence" value="ECO:0007669"/>
    <property type="project" value="InterPro"/>
</dbReference>
<dbReference type="Gene3D" id="1.50.10.10">
    <property type="match status" value="1"/>
</dbReference>
<dbReference type="Gene3D" id="2.70.98.40">
    <property type="entry name" value="Glycoside hydrolase, family 65, N-terminal domain"/>
    <property type="match status" value="1"/>
</dbReference>
<dbReference type="InterPro" id="IPR008928">
    <property type="entry name" value="6-hairpin_glycosidase_sf"/>
</dbReference>
<dbReference type="InterPro" id="IPR012341">
    <property type="entry name" value="6hp_glycosidase-like_sf"/>
</dbReference>
<dbReference type="InterPro" id="IPR011013">
    <property type="entry name" value="Gal_mutarotase_sf_dom"/>
</dbReference>
<dbReference type="InterPro" id="IPR005195">
    <property type="entry name" value="Glyco_hydro_65_M"/>
</dbReference>
<dbReference type="InterPro" id="IPR005196">
    <property type="entry name" value="Glyco_hydro_65_N"/>
</dbReference>
<dbReference type="InterPro" id="IPR037018">
    <property type="entry name" value="Glyco_hydro_65_N_sf"/>
</dbReference>
<dbReference type="PANTHER" id="PTHR11051">
    <property type="entry name" value="GLYCOSYL HYDROLASE-RELATED"/>
    <property type="match status" value="1"/>
</dbReference>
<dbReference type="PANTHER" id="PTHR11051:SF8">
    <property type="entry name" value="PROTEIN-GLUCOSYLGALACTOSYLHYDROXYLYSINE GLUCOSIDASE"/>
    <property type="match status" value="1"/>
</dbReference>
<dbReference type="Pfam" id="PF03632">
    <property type="entry name" value="Glyco_hydro_65m"/>
    <property type="match status" value="1"/>
</dbReference>
<dbReference type="Pfam" id="PF03636">
    <property type="entry name" value="Glyco_hydro_65N"/>
    <property type="match status" value="1"/>
</dbReference>
<dbReference type="SUPFAM" id="SSF74650">
    <property type="entry name" value="Galactose mutarotase-like"/>
    <property type="match status" value="1"/>
</dbReference>
<dbReference type="SUPFAM" id="SSF48208">
    <property type="entry name" value="Six-hairpin glycosidases"/>
    <property type="match status" value="1"/>
</dbReference>
<proteinExistence type="evidence at protein level"/>
<name>KJASE_FLAJ1</name>
<comment type="function">
    <text evidence="2 3">Glycosidase that specifically hydrolyzes kojibiose to beta-glucose and glucose (PubMed:34728215). Also hydrolyzes, with lower catalytic efficiency, longer kojioligosaccharides (from kojitriose to kojipentaose) and shorter oligosaccharides produced by the degradation of dextran-containing alpha-1,2 branches (PubMed:34728215). Probably acts on alpha-(1-&gt;2)-glucosyl isomaltooligosaccharides (PubMed:37269952). Shows weak activity with nigerose but has no activity toward p-nitrophenyl alpha-glucopyranoside, which is a general substrate of exo-acting alpha-glucoside hydrolases (PubMed:34728215). Has a strict specificity for alpha-1,2-glucosidic linkages (PubMed:34728215). Catalyzes the hydrolytic reaction via an anomer-inverting mechanism (PubMed:34728215).</text>
</comment>
<comment type="catalytic activity">
    <reaction evidence="2">
        <text>kojibiose + H2O = beta-D-glucose + D-glucose</text>
        <dbReference type="Rhea" id="RHEA:69611"/>
        <dbReference type="ChEBI" id="CHEBI:4167"/>
        <dbReference type="ChEBI" id="CHEBI:15377"/>
        <dbReference type="ChEBI" id="CHEBI:15903"/>
        <dbReference type="ChEBI" id="CHEBI:142460"/>
        <dbReference type="EC" id="3.2.1.216"/>
    </reaction>
</comment>
<comment type="biophysicochemical properties">
    <kinetics>
        <KM evidence="2">0.28 mM for kojibiose</KM>
        <KM evidence="2">0.13 mM for kojitriose</KM>
        <KM evidence="2">0.82 mM for kojitetraose</KM>
        <KM evidence="2">0.96 mM for kojipentaose</KM>
        <KM evidence="2">0.44 mM for 6-O-alpha-kojibiosylglucose (G2G6G)</KM>
        <KM evidence="2">0.83 mM for 6-O-alpha-kojitriosylglucose (G2G2G6G)</KM>
        <KM evidence="2">3.1 mM for alpha-D-glucopyranosyl fluoride (alpha-GlcF)</KM>
        <text evidence="2">kcat is 108 sec(-1) with kojibiose as substrate. kcat is 46.5 sec(-1) with kojitriose as substrate. kcat is 67.5 sec(-1) with kojitetraose as substrate. kcat is 44.5 sec(-1) with kojipentaose as substrate. kcat is 72.8 sec(-1) with G2G6G as substrate. kcat is 59.3 sec(-1) with G2G2G6G as substrate. kcat is 56.1 sec(-1) with alpha-GlcF as substrate.</text>
    </kinetics>
    <phDependence>
        <text evidence="2">Optimum pH is 5.5.</text>
    </phDependence>
    <temperatureDependence>
        <text evidence="2">Optimum temperature is 40 degrees Celsius.</text>
    </temperatureDependence>
</comment>
<comment type="subunit">
    <text evidence="2">Homohexamer; dimer of trimers.</text>
</comment>
<comment type="subcellular location">
    <subcellularLocation>
        <location evidence="8">Periplasm</location>
    </subcellularLocation>
</comment>
<comment type="similarity">
    <text evidence="7">Belongs to the glycosyl hydrolase 65 family.</text>
</comment>
<comment type="sequence caution" evidence="7">
    <conflict type="erroneous initiation">
        <sequence resource="EMBL-CDS" id="ABQ07432"/>
    </conflict>
    <text>Truncated N-terminus.</text>
</comment>
<organism>
    <name type="scientific">Flavobacterium johnsoniae (strain ATCC 17061 / DSM 2064 / JCM 8514 / BCRC 14874 / CCUG 350202 / NBRC 14942 / NCIMB 11054 / UW101)</name>
    <name type="common">Cytophaga johnsonae</name>
    <dbReference type="NCBI Taxonomy" id="376686"/>
    <lineage>
        <taxon>Bacteria</taxon>
        <taxon>Pseudomonadati</taxon>
        <taxon>Bacteroidota</taxon>
        <taxon>Flavobacteriia</taxon>
        <taxon>Flavobacteriales</taxon>
        <taxon>Flavobacteriaceae</taxon>
        <taxon>Flavobacterium</taxon>
    </lineage>
</organism>
<protein>
    <recommendedName>
        <fullName evidence="5">Kojibiose hydrolase</fullName>
        <ecNumber evidence="2">3.2.1.216</ecNumber>
    </recommendedName>
    <alternativeName>
        <fullName evidence="4">Alpha-1,2-D-glucoside glucohydrolase</fullName>
        <shortName evidence="4">Alpha-1,2-glucosidase</shortName>
    </alternativeName>
    <alternativeName>
        <fullName evidence="4">FjGH65A</fullName>
    </alternativeName>
    <alternativeName>
        <fullName evidence="6">Kojibiase</fullName>
    </alternativeName>
</protein>
<sequence>MKKYIFNHVFFFLMLCGSNYLYSQDPWKLSADKPDSNNYYGETVANGMIGIISSPEPLKVKEVVLAGTYDIYKRGRVSSFIPNYNLLNMKLAFNGESVQTYNINNYKQELDMRNGAFTGSFQFKDLATVTYSYYALRHLPHCIMMVVNINTQKDTEINVENLLETPSSLNNQQNYFQNITNTHVNIPLLTSVAFTPTGRSKIAVSNTFLFDEGKKLQPEILHRMNDADMHAMSFDKKIKAGKTYSFALIGSLISSDHINDPYNEAERLTIYAALEGKSRLLNRHMQEWNSLWQSDIQVEGDPQAQQDIRSMLYHLYSFTRKSTSLSPSPMGLSGLGYNGHVFWDTEIWMFPPMLLLHPEIAKSMIEYRYQRLDAARKKAAIYGYDGAMFPWESADSGAEETPVNALTGAFEHHVTGDVAIAAWQYYLVTGDKEWLKEKGWPILKATAEFWASRVEKNDKGEYEIKNVVAADEWAENIDNNAYTNGTAIRNLQYASKCATVLGVIAPKEWTLIADKILISKMSNGVTREHDSYTDQNIKQADANLLAYPLKLITDKEQIERDLKYYQTKIPQSDTPAMTQAIFSLLYSRLEDSDQAYHWFKDAYQPNLNPPFRVISECKGGTNPYFSTGAGGVLQAVIMGFGGLDIDAAGGIKQVKSVLPKNWKKLTITGIGIEKKTFVLTH</sequence>
<feature type="signal peptide" evidence="1">
    <location>
        <begin position="1"/>
        <end position="23"/>
    </location>
</feature>
<feature type="chain" id="PRO_0000461492" description="Kojibiose hydrolase">
    <location>
        <begin position="24"/>
        <end position="681"/>
    </location>
</feature>
<feature type="active site" description="Proton donor" evidence="7 8">
    <location>
        <position position="472"/>
    </location>
</feature>
<feature type="active site" description="Proton acceptor" evidence="7 8">
    <location>
        <position position="616"/>
    </location>
</feature>
<feature type="binding site" evidence="2 11">
    <location>
        <position position="74"/>
    </location>
    <ligand>
        <name>beta-D-glucose</name>
        <dbReference type="ChEBI" id="CHEBI:15903"/>
        <label>1</label>
    </ligand>
</feature>
<feature type="binding site" evidence="2 11">
    <location>
        <position position="343"/>
    </location>
    <ligand>
        <name>beta-D-glucose</name>
        <dbReference type="ChEBI" id="CHEBI:15903"/>
        <label>2</label>
    </ligand>
</feature>
<feature type="binding site" evidence="2 11">
    <location>
        <position position="344"/>
    </location>
    <ligand>
        <name>beta-D-glucose</name>
        <dbReference type="ChEBI" id="CHEBI:15903"/>
        <label>2</label>
    </ligand>
</feature>
<feature type="binding site" evidence="2 11">
    <location>
        <position position="391"/>
    </location>
    <ligand>
        <name>beta-D-glucose</name>
        <dbReference type="ChEBI" id="CHEBI:15903"/>
        <label>1</label>
    </ligand>
</feature>
<feature type="binding site" evidence="2 11">
    <location>
        <position position="392"/>
    </location>
    <ligand>
        <name>beta-D-glucose</name>
        <dbReference type="ChEBI" id="CHEBI:15903"/>
        <label>1</label>
    </ligand>
</feature>
<feature type="binding site" evidence="2 11">
    <location>
        <position position="407"/>
    </location>
    <ligand>
        <name>beta-D-glucose</name>
        <dbReference type="ChEBI" id="CHEBI:15903"/>
        <label>1</label>
    </ligand>
</feature>
<feature type="binding site" evidence="2 11">
    <location>
        <position position="472"/>
    </location>
    <ligand>
        <name>beta-D-glucose</name>
        <dbReference type="ChEBI" id="CHEBI:15903"/>
        <label>1</label>
    </ligand>
</feature>
<feature type="binding site" evidence="2 11">
    <location>
        <position position="473"/>
    </location>
    <ligand>
        <name>beta-D-glucose</name>
        <dbReference type="ChEBI" id="CHEBI:15903"/>
        <label>3</label>
    </ligand>
</feature>
<feature type="binding site" evidence="2 11">
    <location>
        <position position="538"/>
    </location>
    <ligand>
        <name>beta-D-glucose</name>
        <dbReference type="ChEBI" id="CHEBI:15903"/>
        <label>1</label>
    </ligand>
</feature>
<feature type="binding site" evidence="2 11">
    <location>
        <position position="538"/>
    </location>
    <ligand>
        <name>beta-D-glucose</name>
        <dbReference type="ChEBI" id="CHEBI:15903"/>
        <label>2</label>
    </ligand>
</feature>
<feature type="binding site" evidence="2 11">
    <location>
        <position position="538"/>
    </location>
    <ligand>
        <name>beta-D-glucose</name>
        <dbReference type="ChEBI" id="CHEBI:15903"/>
        <label>3</label>
    </ligand>
</feature>
<feature type="binding site" evidence="2 11">
    <location>
        <position position="539"/>
    </location>
    <ligand>
        <name>beta-D-glucose</name>
        <dbReference type="ChEBI" id="CHEBI:15903"/>
        <label>2</label>
    </ligand>
</feature>
<feature type="binding site" evidence="2 11">
    <location>
        <position position="573"/>
    </location>
    <ligand>
        <name>beta-D-glucose</name>
        <dbReference type="ChEBI" id="CHEBI:15903"/>
        <label>3</label>
    </ligand>
</feature>
<feature type="mutagenesis site" description="Loss of activity with kojibiose as substrate." evidence="2">
    <original>E</original>
    <variation>Q</variation>
    <location>
        <position position="472"/>
    </location>
</feature>
<feature type="mutagenesis site" description="Loss of activity with kojibiose as substrate." evidence="2">
    <original>E</original>
    <variation>Q</variation>
    <location>
        <position position="616"/>
    </location>
</feature>
<feature type="strand" evidence="14">
    <location>
        <begin position="26"/>
        <end position="33"/>
    </location>
</feature>
<feature type="helix" evidence="14">
    <location>
        <begin position="36"/>
        <end position="38"/>
    </location>
</feature>
<feature type="strand" evidence="14">
    <location>
        <begin position="43"/>
        <end position="45"/>
    </location>
</feature>
<feature type="strand" evidence="14">
    <location>
        <begin position="47"/>
        <end position="53"/>
    </location>
</feature>
<feature type="strand" evidence="14">
    <location>
        <begin position="60"/>
        <end position="65"/>
    </location>
</feature>
<feature type="helix" evidence="14">
    <location>
        <begin position="74"/>
        <end position="76"/>
    </location>
</feature>
<feature type="strand" evidence="14">
    <location>
        <begin position="77"/>
        <end position="79"/>
    </location>
</feature>
<feature type="strand" evidence="14">
    <location>
        <begin position="89"/>
        <end position="93"/>
    </location>
</feature>
<feature type="strand" evidence="14">
    <location>
        <begin position="102"/>
        <end position="111"/>
    </location>
</feature>
<feature type="turn" evidence="14">
    <location>
        <begin position="112"/>
        <end position="115"/>
    </location>
</feature>
<feature type="strand" evidence="14">
    <location>
        <begin position="116"/>
        <end position="123"/>
    </location>
</feature>
<feature type="turn" evidence="14">
    <location>
        <begin position="124"/>
        <end position="126"/>
    </location>
</feature>
<feature type="strand" evidence="14">
    <location>
        <begin position="127"/>
        <end position="135"/>
    </location>
</feature>
<feature type="strand" evidence="14">
    <location>
        <begin position="142"/>
        <end position="153"/>
    </location>
</feature>
<feature type="strand" evidence="14">
    <location>
        <begin position="155"/>
        <end position="164"/>
    </location>
</feature>
<feature type="strand" evidence="14">
    <location>
        <begin position="170"/>
        <end position="180"/>
    </location>
</feature>
<feature type="strand" evidence="14">
    <location>
        <begin position="185"/>
        <end position="194"/>
    </location>
</feature>
<feature type="strand" evidence="14">
    <location>
        <begin position="201"/>
        <end position="212"/>
    </location>
</feature>
<feature type="turn" evidence="14">
    <location>
        <begin position="214"/>
        <end position="216"/>
    </location>
</feature>
<feature type="strand" evidence="14">
    <location>
        <begin position="221"/>
        <end position="226"/>
    </location>
</feature>
<feature type="strand" evidence="14">
    <location>
        <begin position="229"/>
        <end position="238"/>
    </location>
</feature>
<feature type="strand" evidence="14">
    <location>
        <begin position="243"/>
        <end position="254"/>
    </location>
</feature>
<feature type="turn" evidence="14">
    <location>
        <begin position="255"/>
        <end position="257"/>
    </location>
</feature>
<feature type="helix" evidence="14">
    <location>
        <begin position="261"/>
        <end position="275"/>
    </location>
</feature>
<feature type="helix" evidence="14">
    <location>
        <begin position="277"/>
        <end position="291"/>
    </location>
</feature>
<feature type="strand" evidence="14">
    <location>
        <begin position="296"/>
        <end position="300"/>
    </location>
</feature>
<feature type="helix" evidence="14">
    <location>
        <begin position="302"/>
        <end position="317"/>
    </location>
</feature>
<feature type="turn" evidence="14">
    <location>
        <begin position="329"/>
        <end position="332"/>
    </location>
</feature>
<feature type="strand" evidence="15">
    <location>
        <begin position="333"/>
        <end position="335"/>
    </location>
</feature>
<feature type="helix" evidence="14">
    <location>
        <begin position="336"/>
        <end position="339"/>
    </location>
</feature>
<feature type="helix" evidence="14">
    <location>
        <begin position="343"/>
        <end position="348"/>
    </location>
</feature>
<feature type="helix" evidence="14">
    <location>
        <begin position="350"/>
        <end position="356"/>
    </location>
</feature>
<feature type="helix" evidence="14">
    <location>
        <begin position="358"/>
        <end position="369"/>
    </location>
</feature>
<feature type="helix" evidence="14">
    <location>
        <begin position="372"/>
        <end position="381"/>
    </location>
</feature>
<feature type="strand" evidence="14">
    <location>
        <begin position="391"/>
        <end position="393"/>
    </location>
</feature>
<feature type="strand" evidence="14">
    <location>
        <begin position="395"/>
        <end position="398"/>
    </location>
</feature>
<feature type="helix" evidence="14">
    <location>
        <begin position="407"/>
        <end position="410"/>
    </location>
</feature>
<feature type="helix" evidence="14">
    <location>
        <begin position="414"/>
        <end position="429"/>
    </location>
</feature>
<feature type="helix" evidence="14">
    <location>
        <begin position="432"/>
        <end position="437"/>
    </location>
</feature>
<feature type="helix" evidence="14">
    <location>
        <begin position="439"/>
        <end position="453"/>
    </location>
</feature>
<feature type="strand" evidence="13">
    <location>
        <begin position="466"/>
        <end position="468"/>
    </location>
</feature>
<feature type="strand" evidence="14">
    <location>
        <begin position="476"/>
        <end position="478"/>
    </location>
</feature>
<feature type="helix" evidence="14">
    <location>
        <begin position="481"/>
        <end position="501"/>
    </location>
</feature>
<feature type="helix" evidence="14">
    <location>
        <begin position="508"/>
        <end position="513"/>
    </location>
</feature>
<feature type="helix" evidence="14">
    <location>
        <begin position="542"/>
        <end position="545"/>
    </location>
</feature>
<feature type="turn" evidence="14">
    <location>
        <begin position="546"/>
        <end position="548"/>
    </location>
</feature>
<feature type="helix" evidence="14">
    <location>
        <begin position="555"/>
        <end position="565"/>
    </location>
</feature>
<feature type="helix" evidence="14">
    <location>
        <begin position="566"/>
        <end position="568"/>
    </location>
</feature>
<feature type="strand" evidence="14">
    <location>
        <begin position="571"/>
        <end position="573"/>
    </location>
</feature>
<feature type="strand" evidence="14">
    <location>
        <begin position="575"/>
        <end position="578"/>
    </location>
</feature>
<feature type="helix" evidence="14">
    <location>
        <begin position="579"/>
        <end position="588"/>
    </location>
</feature>
<feature type="helix" evidence="14">
    <location>
        <begin position="592"/>
        <end position="603"/>
    </location>
</feature>
<feature type="helix" evidence="14">
    <location>
        <begin position="604"/>
        <end position="606"/>
    </location>
</feature>
<feature type="turn" evidence="14">
    <location>
        <begin position="609"/>
        <end position="612"/>
    </location>
</feature>
<feature type="helix" evidence="14">
    <location>
        <begin position="626"/>
        <end position="637"/>
    </location>
</feature>
<feature type="turn" evidence="14">
    <location>
        <begin position="638"/>
        <end position="641"/>
    </location>
</feature>
<feature type="strand" evidence="14">
    <location>
        <begin position="643"/>
        <end position="645"/>
    </location>
</feature>
<feature type="strand" evidence="14">
    <location>
        <begin position="649"/>
        <end position="653"/>
    </location>
</feature>
<feature type="strand" evidence="14">
    <location>
        <begin position="664"/>
        <end position="670"/>
    </location>
</feature>
<feature type="turn" evidence="14">
    <location>
        <begin position="671"/>
        <end position="674"/>
    </location>
</feature>
<feature type="strand" evidence="14">
    <location>
        <begin position="675"/>
        <end position="680"/>
    </location>
</feature>
<gene>
    <name evidence="9" type="ordered locus">Fjoh_4428</name>
</gene>
<evidence type="ECO:0000255" key="1"/>
<evidence type="ECO:0000269" key="2">
    <source>
    </source>
</evidence>
<evidence type="ECO:0000269" key="3">
    <source>
    </source>
</evidence>
<evidence type="ECO:0000303" key="4">
    <source>
    </source>
</evidence>
<evidence type="ECO:0000303" key="5">
    <source>
    </source>
</evidence>
<evidence type="ECO:0000305" key="6"/>
<evidence type="ECO:0000305" key="7">
    <source>
    </source>
</evidence>
<evidence type="ECO:0000305" key="8">
    <source>
    </source>
</evidence>
<evidence type="ECO:0000312" key="9">
    <source>
        <dbReference type="EMBL" id="ABQ07432.1"/>
    </source>
</evidence>
<evidence type="ECO:0007744" key="10">
    <source>
        <dbReference type="PDB" id="7FE3"/>
    </source>
</evidence>
<evidence type="ECO:0007744" key="11">
    <source>
        <dbReference type="PDB" id="7FE4"/>
    </source>
</evidence>
<evidence type="ECO:0007744" key="12">
    <source>
        <dbReference type="PDB" id="8IUC"/>
    </source>
</evidence>
<evidence type="ECO:0007829" key="13">
    <source>
        <dbReference type="PDB" id="7FE3"/>
    </source>
</evidence>
<evidence type="ECO:0007829" key="14">
    <source>
        <dbReference type="PDB" id="7FE4"/>
    </source>
</evidence>
<evidence type="ECO:0007829" key="15">
    <source>
        <dbReference type="PDB" id="8IUC"/>
    </source>
</evidence>